<feature type="signal peptide" evidence="2">
    <location>
        <begin position="1"/>
        <end position="21"/>
    </location>
</feature>
<feature type="chain" id="PRO_0000366101" description="Kunitz-type serine protease inhibitor Hg1">
    <location>
        <begin position="22"/>
        <end position="88"/>
    </location>
</feature>
<feature type="domain" description="BPTI/Kunitz inhibitor" evidence="3">
    <location>
        <begin position="29"/>
        <end position="79"/>
    </location>
</feature>
<feature type="site" description="Reactive bond for trypsin" evidence="1">
    <location>
        <begin position="39"/>
        <end position="40"/>
    </location>
</feature>
<feature type="site" description="Pore-blocking residue" evidence="6">
    <location>
        <position position="77"/>
    </location>
</feature>
<feature type="glycosylation site" description="N-linked (GlcNAc...) asparagine" evidence="2">
    <location>
        <position position="68"/>
    </location>
</feature>
<feature type="disulfide bond" evidence="3">
    <location>
        <begin position="29"/>
        <end position="79"/>
    </location>
</feature>
<feature type="disulfide bond" evidence="3">
    <location>
        <begin position="38"/>
        <end position="62"/>
    </location>
</feature>
<feature type="disulfide bond" evidence="3">
    <location>
        <begin position="54"/>
        <end position="75"/>
    </location>
</feature>
<feature type="mutagenesis site" description="94-fold reduction in KCNA3 inhibition." evidence="4">
    <original>K</original>
    <variation>A</variation>
    <location>
        <position position="77"/>
    </location>
</feature>
<feature type="mutagenesis site" description="49-fold reduction in KCNA3 inhibition." evidence="4">
    <original>R</original>
    <variation>A</variation>
    <location>
        <position position="78"/>
    </location>
</feature>
<feature type="mutagenesis site" description="58-fold reduction in KCNA3 inhibition." evidence="4">
    <original>F</original>
    <variation>A</variation>
    <location>
        <position position="82"/>
    </location>
</feature>
<feature type="mutagenesis site" description="74-fold reduction in KCNA3 inhibition." evidence="4">
    <original>K</original>
    <variation>A</variation>
    <location>
        <position position="84"/>
    </location>
</feature>
<organism>
    <name type="scientific">Hoffmannihadrurus gertschi</name>
    <name type="common">Scorpion</name>
    <name type="synonym">Hadrurus gertschi</name>
    <dbReference type="NCBI Taxonomy" id="380989"/>
    <lineage>
        <taxon>Eukaryota</taxon>
        <taxon>Metazoa</taxon>
        <taxon>Ecdysozoa</taxon>
        <taxon>Arthropoda</taxon>
        <taxon>Chelicerata</taxon>
        <taxon>Arachnida</taxon>
        <taxon>Scorpiones</taxon>
        <taxon>Iurida</taxon>
        <taxon>Iuroidea</taxon>
        <taxon>Hadrurus</taxon>
    </lineage>
</organism>
<sequence length="88" mass="9855">MIIFYGLFSILVLTSINIAEAGHHNRVNCLLPPKTGPCKGSFARYYFDIETGSCKAFIYGGCEGNSNNFSEKHHCEKRCRGFRKFGGK</sequence>
<comment type="function">
    <text evidence="4">Dual-function toxin that inhibits trypsin at a molar ratio of 1:1 (Ki=107 nM) and inhibits mKv1.3/KCNA3 potassium channels (IC(50)=6.2 nM, and inhibits 80% of currents at 1 uM).</text>
</comment>
<comment type="subcellular location">
    <subcellularLocation>
        <location evidence="7">Secreted</location>
    </subcellularLocation>
</comment>
<comment type="tissue specificity">
    <text>Expressed by the venom gland.</text>
</comment>
<comment type="miscellaneous">
    <text evidence="4">Negative results: has no effect on chymotrypsin, nor elastase, nor the KCa1.1/KCNMA1 potassium channel. Shows weak inhibitory activity against mKv1.1/KCNA1 (1 uM inhibits less than 50% of currents), hKv1.2/KCNA2 (1 uM inhibits less than 50% of currents), and hKCa2.3/KCNN3.</text>
</comment>
<comment type="similarity">
    <text evidence="6">Belongs to the venom Kunitz-type family. Scorpion delta-Ktx subfamily. Delta-Ktx 1 sub-subfamily.</text>
</comment>
<evidence type="ECO:0000250" key="1"/>
<evidence type="ECO:0000255" key="2"/>
<evidence type="ECO:0000255" key="3">
    <source>
        <dbReference type="PROSITE-ProRule" id="PRU00031"/>
    </source>
</evidence>
<evidence type="ECO:0000269" key="4">
    <source>
    </source>
</evidence>
<evidence type="ECO:0000303" key="5">
    <source>
    </source>
</evidence>
<evidence type="ECO:0000305" key="6"/>
<evidence type="ECO:0000305" key="7">
    <source>
    </source>
</evidence>
<keyword id="KW-1015">Disulfide bond</keyword>
<keyword id="KW-0325">Glycoprotein</keyword>
<keyword id="KW-0872">Ion channel impairing toxin</keyword>
<keyword id="KW-0632">Potassium channel impairing toxin</keyword>
<keyword id="KW-0646">Protease inhibitor</keyword>
<keyword id="KW-0964">Secreted</keyword>
<keyword id="KW-0722">Serine protease inhibitor</keyword>
<keyword id="KW-0732">Signal</keyword>
<keyword id="KW-0800">Toxin</keyword>
<keyword id="KW-1220">Voltage-gated potassium channel impairing toxin</keyword>
<dbReference type="EMBL" id="EL698904">
    <property type="status" value="NOT_ANNOTATED_CDS"/>
    <property type="molecule type" value="mRNA"/>
</dbReference>
<dbReference type="SMR" id="P0C8W3"/>
<dbReference type="GO" id="GO:0005576">
    <property type="term" value="C:extracellular region"/>
    <property type="evidence" value="ECO:0000303"/>
    <property type="project" value="UniProtKB"/>
</dbReference>
<dbReference type="GO" id="GO:0005615">
    <property type="term" value="C:extracellular space"/>
    <property type="evidence" value="ECO:0007669"/>
    <property type="project" value="TreeGrafter"/>
</dbReference>
<dbReference type="GO" id="GO:0043655">
    <property type="term" value="C:host extracellular space"/>
    <property type="evidence" value="ECO:0000303"/>
    <property type="project" value="UniProtKB"/>
</dbReference>
<dbReference type="GO" id="GO:0015459">
    <property type="term" value="F:potassium channel regulator activity"/>
    <property type="evidence" value="ECO:0007669"/>
    <property type="project" value="UniProtKB-KW"/>
</dbReference>
<dbReference type="GO" id="GO:0004867">
    <property type="term" value="F:serine-type endopeptidase inhibitor activity"/>
    <property type="evidence" value="ECO:0000314"/>
    <property type="project" value="UniProtKB"/>
</dbReference>
<dbReference type="GO" id="GO:0090729">
    <property type="term" value="F:toxin activity"/>
    <property type="evidence" value="ECO:0007669"/>
    <property type="project" value="UniProtKB-KW"/>
</dbReference>
<dbReference type="GO" id="GO:0044562">
    <property type="term" value="P:envenomation resulting in negative regulation of voltage-gated potassium channel activity in another organism"/>
    <property type="evidence" value="ECO:0000314"/>
    <property type="project" value="UniProtKB"/>
</dbReference>
<dbReference type="CDD" id="cd22603">
    <property type="entry name" value="Kunitz_SmCI_3-like"/>
    <property type="match status" value="1"/>
</dbReference>
<dbReference type="FunFam" id="4.10.410.10:FF:000072">
    <property type="entry name" value="Kunitz-type serine protease inhibitor BmKTT-3"/>
    <property type="match status" value="1"/>
</dbReference>
<dbReference type="Gene3D" id="4.10.410.10">
    <property type="entry name" value="Pancreatic trypsin inhibitor Kunitz domain"/>
    <property type="match status" value="1"/>
</dbReference>
<dbReference type="InterPro" id="IPR002223">
    <property type="entry name" value="Kunitz_BPTI"/>
</dbReference>
<dbReference type="InterPro" id="IPR036880">
    <property type="entry name" value="Kunitz_BPTI_sf"/>
</dbReference>
<dbReference type="InterPro" id="IPR020901">
    <property type="entry name" value="Prtase_inh_Kunz-CS"/>
</dbReference>
<dbReference type="InterPro" id="IPR050098">
    <property type="entry name" value="TFPI/VKTCI-like"/>
</dbReference>
<dbReference type="PANTHER" id="PTHR10083:SF374">
    <property type="entry name" value="BPTI_KUNITZ INHIBITOR DOMAIN-CONTAINING PROTEIN"/>
    <property type="match status" value="1"/>
</dbReference>
<dbReference type="PANTHER" id="PTHR10083">
    <property type="entry name" value="KUNITZ-TYPE PROTEASE INHIBITOR-RELATED"/>
    <property type="match status" value="1"/>
</dbReference>
<dbReference type="Pfam" id="PF00014">
    <property type="entry name" value="Kunitz_BPTI"/>
    <property type="match status" value="1"/>
</dbReference>
<dbReference type="PRINTS" id="PR00759">
    <property type="entry name" value="BASICPTASE"/>
</dbReference>
<dbReference type="SMART" id="SM00131">
    <property type="entry name" value="KU"/>
    <property type="match status" value="1"/>
</dbReference>
<dbReference type="SUPFAM" id="SSF57362">
    <property type="entry name" value="BPTI-like"/>
    <property type="match status" value="1"/>
</dbReference>
<dbReference type="PROSITE" id="PS00280">
    <property type="entry name" value="BPTI_KUNITZ_1"/>
    <property type="match status" value="1"/>
</dbReference>
<dbReference type="PROSITE" id="PS50279">
    <property type="entry name" value="BPTI_KUNITZ_2"/>
    <property type="match status" value="1"/>
</dbReference>
<proteinExistence type="evidence at protein level"/>
<accession>P0C8W3</accession>
<reference key="1">
    <citation type="journal article" date="2007" name="BMC Genomics">
        <title>Transcriptome analysis of the venom gland of the Mexican scorpion Hadrurus gertschi (Arachnida: Scorpiones).</title>
        <authorList>
            <person name="Schwartz E.F."/>
            <person name="Diego-Garcia E."/>
            <person name="Rodriguez de la Vega R.C."/>
            <person name="Possani L.D."/>
        </authorList>
    </citation>
    <scope>NUCLEOTIDE SEQUENCE [LARGE SCALE MRNA]</scope>
    <source>
        <tissue>Venom gland</tissue>
    </source>
</reference>
<reference key="2">
    <citation type="journal article" date="2012" name="J. Biol. Chem.">
        <title>Hg1, novel peptide inhibitor specific for Kv1.3 channels from first scorpion Kunitz-type potassium channel toxin family.</title>
        <authorList>
            <person name="Chen Z.-Y."/>
            <person name="Hu Y.T."/>
            <person name="Yang W.S."/>
            <person name="He Y.W."/>
            <person name="Feng J."/>
            <person name="Wang B."/>
            <person name="Zhao R.M."/>
            <person name="Ding J.P."/>
            <person name="Cao Z.-J."/>
            <person name="Li W.-X."/>
            <person name="Wu Y.-L."/>
        </authorList>
    </citation>
    <scope>FUNCTION</scope>
    <scope>RECOMBINANT EXPRESSION</scope>
    <scope>MUTAGENESIS OF LYS-77; ARG-78; PHE-82 AND LYS-84</scope>
</reference>
<name>VKT11_HOFGE</name>
<protein>
    <recommendedName>
        <fullName evidence="5">Kunitz-type serine protease inhibitor Hg1</fullName>
    </recommendedName>
    <alternativeName>
        <fullName>Delta-KTx 1.1</fullName>
    </alternativeName>
</protein>